<feature type="chain" id="PRO_0000462300" description="Inward rectifier potassium channel 13">
    <location>
        <begin position="1"/>
        <end position="360"/>
    </location>
</feature>
<feature type="topological domain" description="Cytoplasmic" evidence="7">
    <location>
        <begin position="1"/>
        <end position="50"/>
    </location>
</feature>
<feature type="transmembrane region" description="Helical; Name=M1" evidence="2">
    <location>
        <begin position="51"/>
        <end position="77"/>
    </location>
</feature>
<feature type="topological domain" description="Extracellular" evidence="7">
    <location>
        <begin position="78"/>
        <end position="105"/>
    </location>
</feature>
<feature type="intramembrane region" description="Helical; Pore-forming" evidence="2">
    <location>
        <begin position="106"/>
        <end position="122"/>
    </location>
</feature>
<feature type="topological domain" description="Extracellular" evidence="7">
    <location>
        <begin position="123"/>
        <end position="131"/>
    </location>
</feature>
<feature type="transmembrane region" description="Helical; Name=M2" evidence="2">
    <location>
        <begin position="132"/>
        <end position="157"/>
    </location>
</feature>
<feature type="topological domain" description="Cytoplasmic" evidence="7">
    <location>
        <begin position="158"/>
        <end position="360"/>
    </location>
</feature>
<feature type="short sequence motif" description="Selectivity filter" evidence="1">
    <location>
        <begin position="119"/>
        <end position="124"/>
    </location>
</feature>
<feature type="site" description="Role in the control of polyamine-mediated channel gating and in the blocking by intracellular magnesium" evidence="1">
    <location>
        <position position="149"/>
    </location>
</feature>
<feature type="modified residue" description="Phosphoserine" evidence="1">
    <location>
        <position position="287"/>
    </location>
</feature>
<reference key="1">
    <citation type="journal article" date="2009" name="Genome Biol.">
        <title>A whole-genome assembly of the domestic cow, Bos taurus.</title>
        <authorList>
            <person name="Zimin A.V."/>
            <person name="Delcher A.L."/>
            <person name="Florea L."/>
            <person name="Kelley D.R."/>
            <person name="Schatz M.C."/>
            <person name="Puiu D."/>
            <person name="Hanrahan F."/>
            <person name="Pertea G."/>
            <person name="Van Tassell C.P."/>
            <person name="Sonstegard T.S."/>
            <person name="Marcais G."/>
            <person name="Roberts M."/>
            <person name="Subramanian P."/>
            <person name="Yorke J.A."/>
            <person name="Salzberg S.L."/>
        </authorList>
    </citation>
    <scope>NUCLEOTIDE SEQUENCE [LARGE SCALE GENOMIC DNA]</scope>
    <source>
        <strain>Hereford</strain>
    </source>
</reference>
<reference key="2">
    <citation type="journal article" date="2018" name="J. Biol. Chem.">
        <title>The small GTPase RAB28 is required for phagocytosis of cone outer segments by the murine retinal pigmented epithelium.</title>
        <authorList>
            <person name="Ying G."/>
            <person name="Boldt K."/>
            <person name="Ueffing M."/>
            <person name="Gerstner C.D."/>
            <person name="Frederick J.M."/>
            <person name="Baehr W."/>
        </authorList>
    </citation>
    <scope>INTERACTION WITH RAB28</scope>
</reference>
<keyword id="KW-1003">Cell membrane</keyword>
<keyword id="KW-0407">Ion channel</keyword>
<keyword id="KW-0406">Ion transport</keyword>
<keyword id="KW-0472">Membrane</keyword>
<keyword id="KW-0597">Phosphoprotein</keyword>
<keyword id="KW-0630">Potassium</keyword>
<keyword id="KW-0633">Potassium transport</keyword>
<keyword id="KW-1185">Reference proteome</keyword>
<keyword id="KW-0812">Transmembrane</keyword>
<keyword id="KW-1133">Transmembrane helix</keyword>
<keyword id="KW-0813">Transport</keyword>
<keyword id="KW-0851">Voltage-gated channel</keyword>
<gene>
    <name type="primary">KCNJ13</name>
</gene>
<protein>
    <recommendedName>
        <fullName evidence="1">Inward rectifier potassium channel 13</fullName>
    </recommendedName>
    <alternativeName>
        <fullName evidence="1">Inward rectifier K(+) channel Kir7.1</fullName>
    </alternativeName>
    <alternativeName>
        <fullName>Potassium channel, inwardly rectifying subfamily J member 13</fullName>
    </alternativeName>
</protein>
<dbReference type="EMBL" id="NKLS02000003">
    <property type="status" value="NOT_ANNOTATED_CDS"/>
    <property type="molecule type" value="Genomic_DNA"/>
</dbReference>
<dbReference type="RefSeq" id="NP_001180183.1">
    <property type="nucleotide sequence ID" value="NM_001193254.1"/>
</dbReference>
<dbReference type="SMR" id="E1BN00"/>
<dbReference type="FunCoup" id="E1BN00">
    <property type="interactions" value="80"/>
</dbReference>
<dbReference type="STRING" id="9913.ENSBTAP00000007700"/>
<dbReference type="PaxDb" id="9913-ENSBTAP00000007700"/>
<dbReference type="Ensembl" id="ENSBTAT00000007700.5">
    <property type="protein sequence ID" value="ENSBTAP00000007700.3"/>
    <property type="gene ID" value="ENSBTAG00000005858.5"/>
</dbReference>
<dbReference type="GeneID" id="512288"/>
<dbReference type="KEGG" id="bta:512288"/>
<dbReference type="CTD" id="3769"/>
<dbReference type="VEuPathDB" id="HostDB:ENSBTAG00000005858"/>
<dbReference type="VGNC" id="VGNC:30456">
    <property type="gene designation" value="KCNJ13"/>
</dbReference>
<dbReference type="eggNOG" id="KOG3827">
    <property type="taxonomic scope" value="Eukaryota"/>
</dbReference>
<dbReference type="GeneTree" id="ENSGT00990000203615"/>
<dbReference type="HOGENOM" id="CLU_022738_3_3_1"/>
<dbReference type="InParanoid" id="E1BN00"/>
<dbReference type="OMA" id="QGQTCLM"/>
<dbReference type="OrthoDB" id="273257at2759"/>
<dbReference type="TreeFam" id="TF313676"/>
<dbReference type="Proteomes" id="UP000009136">
    <property type="component" value="Chromosome 3"/>
</dbReference>
<dbReference type="Bgee" id="ENSBTAG00000005858">
    <property type="expression patterns" value="Expressed in pigment epithelium of eye and 31 other cell types or tissues"/>
</dbReference>
<dbReference type="GO" id="GO:0034702">
    <property type="term" value="C:monoatomic ion channel complex"/>
    <property type="evidence" value="ECO:0007669"/>
    <property type="project" value="UniProtKB-KW"/>
</dbReference>
<dbReference type="GO" id="GO:0005886">
    <property type="term" value="C:plasma membrane"/>
    <property type="evidence" value="ECO:0000318"/>
    <property type="project" value="GO_Central"/>
</dbReference>
<dbReference type="GO" id="GO:0005242">
    <property type="term" value="F:inward rectifier potassium channel activity"/>
    <property type="evidence" value="ECO:0000318"/>
    <property type="project" value="GO_Central"/>
</dbReference>
<dbReference type="GO" id="GO:1990573">
    <property type="term" value="P:potassium ion import across plasma membrane"/>
    <property type="evidence" value="ECO:0000318"/>
    <property type="project" value="GO_Central"/>
</dbReference>
<dbReference type="GO" id="GO:0034765">
    <property type="term" value="P:regulation of monoatomic ion transmembrane transport"/>
    <property type="evidence" value="ECO:0000318"/>
    <property type="project" value="GO_Central"/>
</dbReference>
<dbReference type="FunFam" id="1.10.287.70:FF:000081">
    <property type="entry name" value="inward rectifier potassium channel 13 isoform X1"/>
    <property type="match status" value="1"/>
</dbReference>
<dbReference type="FunFam" id="2.60.40.1400:FF:000004">
    <property type="entry name" value="inward rectifier potassium channel 13 isoform X1"/>
    <property type="match status" value="1"/>
</dbReference>
<dbReference type="Gene3D" id="1.10.287.70">
    <property type="match status" value="1"/>
</dbReference>
<dbReference type="Gene3D" id="2.60.40.1400">
    <property type="entry name" value="G protein-activated inward rectifier potassium channel 1"/>
    <property type="match status" value="1"/>
</dbReference>
<dbReference type="InterPro" id="IPR014756">
    <property type="entry name" value="Ig_E-set"/>
</dbReference>
<dbReference type="InterPro" id="IPR041647">
    <property type="entry name" value="IRK_C"/>
</dbReference>
<dbReference type="InterPro" id="IPR016449">
    <property type="entry name" value="K_chnl_inward-rec_Kir"/>
</dbReference>
<dbReference type="InterPro" id="IPR013518">
    <property type="entry name" value="K_chnl_inward-rec_Kir_cyto"/>
</dbReference>
<dbReference type="InterPro" id="IPR008062">
    <property type="entry name" value="KCNJ13"/>
</dbReference>
<dbReference type="InterPro" id="IPR040445">
    <property type="entry name" value="Kir_TM"/>
</dbReference>
<dbReference type="PANTHER" id="PTHR11767">
    <property type="entry name" value="INWARD RECTIFIER POTASSIUM CHANNEL"/>
    <property type="match status" value="1"/>
</dbReference>
<dbReference type="PANTHER" id="PTHR11767:SF3">
    <property type="entry name" value="INWARD RECTIFIER POTASSIUM CHANNEL 13"/>
    <property type="match status" value="1"/>
</dbReference>
<dbReference type="Pfam" id="PF01007">
    <property type="entry name" value="IRK"/>
    <property type="match status" value="1"/>
</dbReference>
<dbReference type="Pfam" id="PF17655">
    <property type="entry name" value="IRK_C"/>
    <property type="match status" value="1"/>
</dbReference>
<dbReference type="PIRSF" id="PIRSF005465">
    <property type="entry name" value="GIRK_kir"/>
    <property type="match status" value="1"/>
</dbReference>
<dbReference type="PRINTS" id="PR01679">
    <property type="entry name" value="KIR7CHANNEL"/>
</dbReference>
<dbReference type="PRINTS" id="PR01320">
    <property type="entry name" value="KIRCHANNEL"/>
</dbReference>
<dbReference type="SUPFAM" id="SSF81296">
    <property type="entry name" value="E set domains"/>
    <property type="match status" value="1"/>
</dbReference>
<dbReference type="SUPFAM" id="SSF81324">
    <property type="entry name" value="Voltage-gated potassium channels"/>
    <property type="match status" value="1"/>
</dbReference>
<comment type="function">
    <text evidence="1">Inward rectifier potassium channels are characterized by a greater tendency to allow potassium to flow into the cell rather than out of it. Their voltage dependence is regulated by the concentration of extracellular potassium; as external potassium is raised, the voltage range of the channel opening shifts to more positive voltages. The inward rectification is mainly due to the blockage of outward current by internal magnesium. KCNJ13 has a very low single channel conductance, low sensitivity to block by external barium and cesium, and no dependence of its inward rectification properties on the internal blocking particle magnesium.</text>
</comment>
<comment type="catalytic activity">
    <reaction evidence="1">
        <text>K(+)(in) = K(+)(out)</text>
        <dbReference type="Rhea" id="RHEA:29463"/>
        <dbReference type="ChEBI" id="CHEBI:29103"/>
    </reaction>
</comment>
<comment type="activity regulation">
    <text evidence="1">Inhibited by Ba(2+) and Cs(+), although sensitivity to those inhibitors is much lower than in other Kir channels.</text>
</comment>
<comment type="subunit">
    <text evidence="2 6">Homotetramer. Interacts with RAB28; the interaction may facilitate cone outer segments phagocytosis (PubMed:30228185).</text>
</comment>
<comment type="subcellular location">
    <subcellularLocation>
        <location evidence="4">Membrane</location>
        <topology evidence="4">Multi-pass membrane protein</topology>
    </subcellularLocation>
    <subcellularLocation>
        <location evidence="3">Cell membrane</location>
    </subcellularLocation>
    <text evidence="3">Localized at the retinal pigmented epithelium (RPE) apical microvilli.</text>
</comment>
<comment type="PTM">
    <text evidence="1">Phosphorylation at Ser-287 by PKA increases them.</text>
</comment>
<comment type="similarity">
    <text evidence="5">Belongs to the inward rectifier-type potassium channel (TC 1.A.2.1) family.</text>
</comment>
<organism>
    <name type="scientific">Bos taurus</name>
    <name type="common">Bovine</name>
    <dbReference type="NCBI Taxonomy" id="9913"/>
    <lineage>
        <taxon>Eukaryota</taxon>
        <taxon>Metazoa</taxon>
        <taxon>Chordata</taxon>
        <taxon>Craniata</taxon>
        <taxon>Vertebrata</taxon>
        <taxon>Euteleostomi</taxon>
        <taxon>Mammalia</taxon>
        <taxon>Eutheria</taxon>
        <taxon>Laurasiatheria</taxon>
        <taxon>Artiodactyla</taxon>
        <taxon>Ruminantia</taxon>
        <taxon>Pecora</taxon>
        <taxon>Bovidae</taxon>
        <taxon>Bovinae</taxon>
        <taxon>Bos</taxon>
    </lineage>
</organism>
<evidence type="ECO:0000250" key="1">
    <source>
        <dbReference type="UniProtKB" id="O60928"/>
    </source>
</evidence>
<evidence type="ECO:0000250" key="2">
    <source>
        <dbReference type="UniProtKB" id="P49655"/>
    </source>
</evidence>
<evidence type="ECO:0000250" key="3">
    <source>
        <dbReference type="UniProtKB" id="P86046"/>
    </source>
</evidence>
<evidence type="ECO:0000255" key="4"/>
<evidence type="ECO:0000255" key="5">
    <source>
        <dbReference type="RuleBase" id="RU003822"/>
    </source>
</evidence>
<evidence type="ECO:0000269" key="6">
    <source>
    </source>
</evidence>
<evidence type="ECO:0000305" key="7"/>
<sequence>MDGSHCKVIAPLLTERHQRMVTKDGHSTLQMDGAQTGLAYLRDAWGILMDMRWRWMMLVFSASFVIHWLVFAVLWYILAEMNGDLGLDHDAPPENHTICVKYITSFTAAFSFSLETQLTIGYGTMFPSGDCPSAIALLAIQMLLGLMLEAFITGAFVAKIARPKNRAFSIRFTDLAVVAHIDGKPNLIFQVANTRPSPLTNVRVSAVLYQERENGKLYQTSVDFHLDGISSEECPFFIFPLTYYHSIIPSSPLATLLQHENPPHFELVVFLSAMQEGTGETCQRRTSYLPSEIMLHHCFASLLARGSKGEYQIKMENFDKTTPEFQTPLVSKSPNRTDLDIHINGQSIDNFQISETGLTE</sequence>
<accession>E1BN00</accession>
<name>KCJ13_BOVIN</name>
<proteinExistence type="evidence at protein level"/>